<feature type="chain" id="PRO_1000034299" description="Transcription elongation factor GreA">
    <location>
        <begin position="1"/>
        <end position="158"/>
    </location>
</feature>
<feature type="coiled-coil region" evidence="1">
    <location>
        <begin position="4"/>
        <end position="70"/>
    </location>
</feature>
<gene>
    <name evidence="1" type="primary">greA</name>
    <name type="ordered locus">SAOUHSC_01714</name>
</gene>
<protein>
    <recommendedName>
        <fullName evidence="1">Transcription elongation factor GreA</fullName>
    </recommendedName>
    <alternativeName>
        <fullName evidence="1">Transcript cleavage factor GreA</fullName>
    </alternativeName>
</protein>
<proteinExistence type="inferred from homology"/>
<comment type="function">
    <text evidence="1">Necessary for efficient RNA polymerase transcription elongation past template-encoded arresting sites. The arresting sites in DNA have the property of trapping a certain fraction of elongating RNA polymerases that pass through, resulting in locked ternary complexes. Cleavage of the nascent transcript by cleavage factors such as GreA or GreB allows the resumption of elongation from the new 3'terminus. GreA releases sequences of 2 to 3 nucleotides.</text>
</comment>
<comment type="similarity">
    <text evidence="1">Belongs to the GreA/GreB family.</text>
</comment>
<keyword id="KW-0175">Coiled coil</keyword>
<keyword id="KW-0238">DNA-binding</keyword>
<keyword id="KW-1185">Reference proteome</keyword>
<keyword id="KW-0804">Transcription</keyword>
<keyword id="KW-0805">Transcription regulation</keyword>
<name>GREA_STAA8</name>
<reference key="1">
    <citation type="book" date="2006" name="Gram positive pathogens, 2nd edition">
        <title>The Staphylococcus aureus NCTC 8325 genome.</title>
        <editorList>
            <person name="Fischetti V."/>
            <person name="Novick R."/>
            <person name="Ferretti J."/>
            <person name="Portnoy D."/>
            <person name="Rood J."/>
        </editorList>
        <authorList>
            <person name="Gillaspy A.F."/>
            <person name="Worrell V."/>
            <person name="Orvis J."/>
            <person name="Roe B.A."/>
            <person name="Dyer D.W."/>
            <person name="Iandolo J.J."/>
        </authorList>
    </citation>
    <scope>NUCLEOTIDE SEQUENCE [LARGE SCALE GENOMIC DNA]</scope>
    <source>
        <strain>NCTC 8325 / PS 47</strain>
    </source>
</reference>
<organism>
    <name type="scientific">Staphylococcus aureus (strain NCTC 8325 / PS 47)</name>
    <dbReference type="NCBI Taxonomy" id="93061"/>
    <lineage>
        <taxon>Bacteria</taxon>
        <taxon>Bacillati</taxon>
        <taxon>Bacillota</taxon>
        <taxon>Bacilli</taxon>
        <taxon>Bacillales</taxon>
        <taxon>Staphylococcaceae</taxon>
        <taxon>Staphylococcus</taxon>
    </lineage>
</organism>
<sequence length="158" mass="17743">MENQKQYPMTQEGFEKLERELEELKTVKRPEVVEKIKVARSFGDLSENSEYDAAKDEQGFIEQDIQRIEHMLRNALIIEDTGDNNVVKIGKTVTFVELPGDEEESYQIVGSAESDAFNGKISNESPMAKALIGKGLDDEVRVPLPNGGEMNVKIVNIQ</sequence>
<accession>Q2FXW7</accession>
<evidence type="ECO:0000255" key="1">
    <source>
        <dbReference type="HAMAP-Rule" id="MF_00105"/>
    </source>
</evidence>
<dbReference type="EMBL" id="CP000253">
    <property type="protein sequence ID" value="ABD30787.1"/>
    <property type="molecule type" value="Genomic_DNA"/>
</dbReference>
<dbReference type="RefSeq" id="WP_000431312.1">
    <property type="nucleotide sequence ID" value="NZ_LS483365.1"/>
</dbReference>
<dbReference type="RefSeq" id="YP_500223.1">
    <property type="nucleotide sequence ID" value="NC_007795.1"/>
</dbReference>
<dbReference type="SMR" id="Q2FXW7"/>
<dbReference type="STRING" id="93061.SAOUHSC_01714"/>
<dbReference type="PaxDb" id="1280-SAXN108_1638"/>
<dbReference type="GeneID" id="3921103"/>
<dbReference type="KEGG" id="sao:SAOUHSC_01714"/>
<dbReference type="PATRIC" id="fig|93061.5.peg.1562"/>
<dbReference type="eggNOG" id="COG0782">
    <property type="taxonomic scope" value="Bacteria"/>
</dbReference>
<dbReference type="HOGENOM" id="CLU_101379_2_1_9"/>
<dbReference type="OrthoDB" id="9808774at2"/>
<dbReference type="PRO" id="PR:Q2FXW7"/>
<dbReference type="Proteomes" id="UP000008816">
    <property type="component" value="Chromosome"/>
</dbReference>
<dbReference type="GO" id="GO:0003677">
    <property type="term" value="F:DNA binding"/>
    <property type="evidence" value="ECO:0007669"/>
    <property type="project" value="UniProtKB-UniRule"/>
</dbReference>
<dbReference type="GO" id="GO:0070063">
    <property type="term" value="F:RNA polymerase binding"/>
    <property type="evidence" value="ECO:0007669"/>
    <property type="project" value="InterPro"/>
</dbReference>
<dbReference type="GO" id="GO:0006354">
    <property type="term" value="P:DNA-templated transcription elongation"/>
    <property type="evidence" value="ECO:0000318"/>
    <property type="project" value="GO_Central"/>
</dbReference>
<dbReference type="GO" id="GO:0032784">
    <property type="term" value="P:regulation of DNA-templated transcription elongation"/>
    <property type="evidence" value="ECO:0007669"/>
    <property type="project" value="UniProtKB-UniRule"/>
</dbReference>
<dbReference type="FunFam" id="1.10.287.180:FF:000001">
    <property type="entry name" value="Transcription elongation factor GreA"/>
    <property type="match status" value="1"/>
</dbReference>
<dbReference type="FunFam" id="3.10.50.30:FF:000001">
    <property type="entry name" value="Transcription elongation factor GreA"/>
    <property type="match status" value="1"/>
</dbReference>
<dbReference type="Gene3D" id="3.10.50.30">
    <property type="entry name" value="Transcription elongation factor, GreA/GreB, C-terminal domain"/>
    <property type="match status" value="1"/>
</dbReference>
<dbReference type="Gene3D" id="1.10.287.180">
    <property type="entry name" value="Transcription elongation factor, GreA/GreB, N-terminal domain"/>
    <property type="match status" value="1"/>
</dbReference>
<dbReference type="HAMAP" id="MF_00105">
    <property type="entry name" value="GreA_GreB"/>
    <property type="match status" value="1"/>
</dbReference>
<dbReference type="InterPro" id="IPR036953">
    <property type="entry name" value="GreA/GreB_C_sf"/>
</dbReference>
<dbReference type="InterPro" id="IPR018151">
    <property type="entry name" value="TF_GreA/GreB_CS"/>
</dbReference>
<dbReference type="InterPro" id="IPR006359">
    <property type="entry name" value="Tscrpt_elong_fac_GreA"/>
</dbReference>
<dbReference type="InterPro" id="IPR028624">
    <property type="entry name" value="Tscrpt_elong_fac_GreA/B"/>
</dbReference>
<dbReference type="InterPro" id="IPR001437">
    <property type="entry name" value="Tscrpt_elong_fac_GreA/B_C"/>
</dbReference>
<dbReference type="InterPro" id="IPR023459">
    <property type="entry name" value="Tscrpt_elong_fac_GreA/B_fam"/>
</dbReference>
<dbReference type="InterPro" id="IPR022691">
    <property type="entry name" value="Tscrpt_elong_fac_GreA/B_N"/>
</dbReference>
<dbReference type="InterPro" id="IPR036805">
    <property type="entry name" value="Tscrpt_elong_fac_GreA/B_N_sf"/>
</dbReference>
<dbReference type="NCBIfam" id="TIGR01462">
    <property type="entry name" value="greA"/>
    <property type="match status" value="1"/>
</dbReference>
<dbReference type="NCBIfam" id="NF001261">
    <property type="entry name" value="PRK00226.1-2"/>
    <property type="match status" value="1"/>
</dbReference>
<dbReference type="NCBIfam" id="NF001263">
    <property type="entry name" value="PRK00226.1-4"/>
    <property type="match status" value="1"/>
</dbReference>
<dbReference type="PANTHER" id="PTHR30437">
    <property type="entry name" value="TRANSCRIPTION ELONGATION FACTOR GREA"/>
    <property type="match status" value="1"/>
</dbReference>
<dbReference type="PANTHER" id="PTHR30437:SF4">
    <property type="entry name" value="TRANSCRIPTION ELONGATION FACTOR GREA"/>
    <property type="match status" value="1"/>
</dbReference>
<dbReference type="Pfam" id="PF01272">
    <property type="entry name" value="GreA_GreB"/>
    <property type="match status" value="1"/>
</dbReference>
<dbReference type="Pfam" id="PF03449">
    <property type="entry name" value="GreA_GreB_N"/>
    <property type="match status" value="1"/>
</dbReference>
<dbReference type="PIRSF" id="PIRSF006092">
    <property type="entry name" value="GreA_GreB"/>
    <property type="match status" value="1"/>
</dbReference>
<dbReference type="SUPFAM" id="SSF54534">
    <property type="entry name" value="FKBP-like"/>
    <property type="match status" value="1"/>
</dbReference>
<dbReference type="SUPFAM" id="SSF46557">
    <property type="entry name" value="GreA transcript cleavage protein, N-terminal domain"/>
    <property type="match status" value="1"/>
</dbReference>
<dbReference type="PROSITE" id="PS00829">
    <property type="entry name" value="GREAB_1"/>
    <property type="match status" value="1"/>
</dbReference>
<dbReference type="PROSITE" id="PS00830">
    <property type="entry name" value="GREAB_2"/>
    <property type="match status" value="1"/>
</dbReference>